<dbReference type="EC" id="1.4.1.2"/>
<dbReference type="EMBL" id="L47648">
    <property type="protein sequence ID" value="AAC83953.1"/>
    <property type="molecule type" value="Genomic_DNA"/>
</dbReference>
<dbReference type="EMBL" id="AL009126">
    <property type="protein sequence ID" value="CAB14212.2"/>
    <property type="molecule type" value="Genomic_DNA"/>
</dbReference>
<dbReference type="PIR" id="G69933">
    <property type="entry name" value="G69933"/>
</dbReference>
<dbReference type="RefSeq" id="NP_390177.2">
    <property type="nucleotide sequence ID" value="NC_000964.3"/>
</dbReference>
<dbReference type="RefSeq" id="WP_010886557.1">
    <property type="nucleotide sequence ID" value="NZ_OZ025638.1"/>
</dbReference>
<dbReference type="PDB" id="3K8Z">
    <property type="method" value="X-ray"/>
    <property type="resolution" value="2.40 A"/>
    <property type="chains" value="A/B/C/D/E/F=1-427"/>
</dbReference>
<dbReference type="PDB" id="7MFT">
    <property type="method" value="EM"/>
    <property type="resolution" value="3.90 A"/>
    <property type="chains" value="A=1-427"/>
</dbReference>
<dbReference type="PDBsum" id="3K8Z"/>
<dbReference type="PDBsum" id="7MFT"/>
<dbReference type="SMR" id="P50735"/>
<dbReference type="FunCoup" id="P50735">
    <property type="interactions" value="489"/>
</dbReference>
<dbReference type="IntAct" id="P50735">
    <property type="interactions" value="1"/>
</dbReference>
<dbReference type="MINT" id="P50735"/>
<dbReference type="STRING" id="224308.BSU22960"/>
<dbReference type="jPOST" id="P50735"/>
<dbReference type="PaxDb" id="224308-BSU22960"/>
<dbReference type="EnsemblBacteria" id="CAB14212">
    <property type="protein sequence ID" value="CAB14212"/>
    <property type="gene ID" value="BSU_22960"/>
</dbReference>
<dbReference type="GeneID" id="938975"/>
<dbReference type="KEGG" id="bsu:BSU22960"/>
<dbReference type="PATRIC" id="fig|224308.179.peg.2503"/>
<dbReference type="eggNOG" id="COG0334">
    <property type="taxonomic scope" value="Bacteria"/>
</dbReference>
<dbReference type="InParanoid" id="P50735"/>
<dbReference type="OrthoDB" id="9803297at2"/>
<dbReference type="PhylomeDB" id="P50735"/>
<dbReference type="BioCyc" id="BSUB:BSU22960-MONOMER"/>
<dbReference type="EvolutionaryTrace" id="P50735"/>
<dbReference type="Proteomes" id="UP000001570">
    <property type="component" value="Chromosome"/>
</dbReference>
<dbReference type="GO" id="GO:0004352">
    <property type="term" value="F:glutamate dehydrogenase (NAD+) activity"/>
    <property type="evidence" value="ECO:0000315"/>
    <property type="project" value="UniProtKB"/>
</dbReference>
<dbReference type="GO" id="GO:0006520">
    <property type="term" value="P:amino acid metabolic process"/>
    <property type="evidence" value="ECO:0000315"/>
    <property type="project" value="UniProtKB"/>
</dbReference>
<dbReference type="GO" id="GO:0006538">
    <property type="term" value="P:glutamate catabolic process"/>
    <property type="evidence" value="ECO:0000318"/>
    <property type="project" value="GO_Central"/>
</dbReference>
<dbReference type="CDD" id="cd01076">
    <property type="entry name" value="NAD_bind_1_Glu_DH"/>
    <property type="match status" value="1"/>
</dbReference>
<dbReference type="FunFam" id="3.40.50.10860:FF:000008">
    <property type="entry name" value="Glutamate dehydrogenase"/>
    <property type="match status" value="1"/>
</dbReference>
<dbReference type="FunFam" id="3.40.50.720:FF:000212">
    <property type="entry name" value="Glutamate dehydrogenase"/>
    <property type="match status" value="1"/>
</dbReference>
<dbReference type="Gene3D" id="1.10.8.1210">
    <property type="match status" value="1"/>
</dbReference>
<dbReference type="Gene3D" id="3.40.50.10860">
    <property type="entry name" value="Leucine Dehydrogenase, chain A, domain 1"/>
    <property type="match status" value="1"/>
</dbReference>
<dbReference type="Gene3D" id="3.40.50.720">
    <property type="entry name" value="NAD(P)-binding Rossmann-like Domain"/>
    <property type="match status" value="1"/>
</dbReference>
<dbReference type="InterPro" id="IPR046346">
    <property type="entry name" value="Aminoacid_DH-like_N_sf"/>
</dbReference>
<dbReference type="InterPro" id="IPR006095">
    <property type="entry name" value="Glu/Leu/Phe/Val/Trp_DH"/>
</dbReference>
<dbReference type="InterPro" id="IPR006096">
    <property type="entry name" value="Glu/Leu/Phe/Val/Trp_DH_C"/>
</dbReference>
<dbReference type="InterPro" id="IPR006097">
    <property type="entry name" value="Glu/Leu/Phe/Val/Trp_DH_dimer"/>
</dbReference>
<dbReference type="InterPro" id="IPR033524">
    <property type="entry name" value="Glu/Leu/Phe/Val_DH_AS"/>
</dbReference>
<dbReference type="InterPro" id="IPR014362">
    <property type="entry name" value="Glu_DH"/>
</dbReference>
<dbReference type="InterPro" id="IPR036291">
    <property type="entry name" value="NAD(P)-bd_dom_sf"/>
</dbReference>
<dbReference type="InterPro" id="IPR033922">
    <property type="entry name" value="NAD_bind_Glu_DH"/>
</dbReference>
<dbReference type="PANTHER" id="PTHR11606">
    <property type="entry name" value="GLUTAMATE DEHYDROGENASE"/>
    <property type="match status" value="1"/>
</dbReference>
<dbReference type="PANTHER" id="PTHR11606:SF13">
    <property type="entry name" value="GLUTAMATE DEHYDROGENASE 1, MITOCHONDRIAL"/>
    <property type="match status" value="1"/>
</dbReference>
<dbReference type="Pfam" id="PF00208">
    <property type="entry name" value="ELFV_dehydrog"/>
    <property type="match status" value="1"/>
</dbReference>
<dbReference type="Pfam" id="PF02812">
    <property type="entry name" value="ELFV_dehydrog_N"/>
    <property type="match status" value="1"/>
</dbReference>
<dbReference type="PIRSF" id="PIRSF000185">
    <property type="entry name" value="Glu_DH"/>
    <property type="match status" value="1"/>
</dbReference>
<dbReference type="PRINTS" id="PR00082">
    <property type="entry name" value="GLFDHDRGNASE"/>
</dbReference>
<dbReference type="SMART" id="SM00839">
    <property type="entry name" value="ELFV_dehydrog"/>
    <property type="match status" value="1"/>
</dbReference>
<dbReference type="SUPFAM" id="SSF53223">
    <property type="entry name" value="Aminoacid dehydrogenase-like, N-terminal domain"/>
    <property type="match status" value="1"/>
</dbReference>
<dbReference type="SUPFAM" id="SSF51735">
    <property type="entry name" value="NAD(P)-binding Rossmann-fold domains"/>
    <property type="match status" value="1"/>
</dbReference>
<dbReference type="PROSITE" id="PS00074">
    <property type="entry name" value="GLFV_DEHYDROGENASE"/>
    <property type="match status" value="1"/>
</dbReference>
<sequence length="427" mass="47340">MAADRNTGHTEEDKLDVLKSTQTVIHKALEKLGYPEEVYELLKEPMRLLTVKIPVRMDDGSVKIFTGYRAQHNDSVGPTKGGIRFHPNVTEKEVKAVKALSIWMSLKCGIIDLPYGGGKGGIVCDPRDMSFRELERLSRGYVRAISQIVGPTKDVPAPDVFTNSQIMAWMMDEYSRIDEFNSPGFITGKPLVLGGSHGRESATAKGVTICIKEAAKKRGIDIKGARVVVQGFGNAGSYLAKFMHDAGAKVVGISDAYGGLYDPEGLDIDYLLDRRDSFGTVTKLFNDTITNQELLELDCDILVPAAIENQITEENAHNIRAKIVVEAANGPTTLEGTKILSDRDILLVPDVLASAGGVTVSYFEWVQNNQGFYWSEEEVEEKLEKMMVKSFNNIYEMANNRRIDMRLAAYMVGVRKMAEASRFRGWI</sequence>
<name>GUDB_BACSU</name>
<organism>
    <name type="scientific">Bacillus subtilis (strain 168)</name>
    <dbReference type="NCBI Taxonomy" id="224308"/>
    <lineage>
        <taxon>Bacteria</taxon>
        <taxon>Bacillati</taxon>
        <taxon>Bacillota</taxon>
        <taxon>Bacilli</taxon>
        <taxon>Bacillales</taxon>
        <taxon>Bacillaceae</taxon>
        <taxon>Bacillus</taxon>
    </lineage>
</organism>
<gene>
    <name evidence="6" type="primary">gudB</name>
    <name type="synonym">ypcA</name>
    <name type="ordered locus">BSU22960</name>
</gene>
<evidence type="ECO:0000250" key="1"/>
<evidence type="ECO:0000255" key="2">
    <source>
        <dbReference type="PROSITE-ProRule" id="PRU10011"/>
    </source>
</evidence>
<evidence type="ECO:0000269" key="3">
    <source>
    </source>
</evidence>
<evidence type="ECO:0000269" key="4">
    <source>
    </source>
</evidence>
<evidence type="ECO:0000269" key="5">
    <source>
    </source>
</evidence>
<evidence type="ECO:0000303" key="6">
    <source>
    </source>
</evidence>
<evidence type="ECO:0000305" key="7"/>
<evidence type="ECO:0007829" key="8">
    <source>
        <dbReference type="PDB" id="3K8Z"/>
    </source>
</evidence>
<feature type="chain" id="PRO_0000418372" description="Cryptic catabolic NAD-specific glutamate dehydrogenase GudB">
    <location>
        <begin position="1"/>
        <end position="427"/>
    </location>
</feature>
<feature type="active site" description="Proton donor" evidence="2">
    <location>
        <position position="119"/>
    </location>
</feature>
<feature type="binding site" evidence="1">
    <location>
        <position position="80"/>
    </location>
    <ligand>
        <name>substrate</name>
    </ligand>
</feature>
<feature type="binding site" evidence="1">
    <location>
        <position position="107"/>
    </location>
    <ligand>
        <name>substrate</name>
    </ligand>
</feature>
<feature type="binding site" evidence="1">
    <location>
        <position position="203"/>
    </location>
    <ligand>
        <name>NAD(+)</name>
        <dbReference type="ChEBI" id="CHEBI:57540"/>
    </ligand>
</feature>
<feature type="binding site" evidence="1">
    <location>
        <position position="234"/>
    </location>
    <ligand>
        <name>NAD(+)</name>
        <dbReference type="ChEBI" id="CHEBI:57540"/>
    </ligand>
</feature>
<feature type="binding site" evidence="1">
    <location>
        <position position="361"/>
    </location>
    <ligand>
        <name>substrate</name>
    </ligand>
</feature>
<feature type="site" description="Important for catalysis" evidence="1">
    <location>
        <position position="159"/>
    </location>
</feature>
<feature type="mutagenesis site" description="In gudB1; gains glutamate dehydrogenase activity, restores growth on proline, arginine, ornithine." evidence="5">
    <location>
        <begin position="97"/>
        <end position="99"/>
    </location>
</feature>
<feature type="sequence conflict" description="In Ref. 1; AAC83953." evidence="7" ref="1">
    <location>
        <position position="71"/>
    </location>
</feature>
<feature type="helix" evidence="8">
    <location>
        <begin position="19"/>
        <end position="32"/>
    </location>
</feature>
<feature type="helix" evidence="8">
    <location>
        <begin position="36"/>
        <end position="42"/>
    </location>
</feature>
<feature type="strand" evidence="8">
    <location>
        <begin position="46"/>
        <end position="56"/>
    </location>
</feature>
<feature type="strand" evidence="8">
    <location>
        <begin position="62"/>
        <end position="70"/>
    </location>
</feature>
<feature type="strand" evidence="8">
    <location>
        <begin position="83"/>
        <end position="85"/>
    </location>
</feature>
<feature type="helix" evidence="8">
    <location>
        <begin position="91"/>
        <end position="96"/>
    </location>
</feature>
<feature type="helix" evidence="8">
    <location>
        <begin position="100"/>
        <end position="111"/>
    </location>
</feature>
<feature type="strand" evidence="8">
    <location>
        <begin position="116"/>
        <end position="122"/>
    </location>
</feature>
<feature type="helix" evidence="8">
    <location>
        <begin position="126"/>
        <end position="128"/>
    </location>
</feature>
<feature type="helix" evidence="8">
    <location>
        <begin position="131"/>
        <end position="145"/>
    </location>
</feature>
<feature type="helix" evidence="8">
    <location>
        <begin position="146"/>
        <end position="148"/>
    </location>
</feature>
<feature type="turn" evidence="8">
    <location>
        <begin position="151"/>
        <end position="153"/>
    </location>
</feature>
<feature type="helix" evidence="8">
    <location>
        <begin position="164"/>
        <end position="178"/>
    </location>
</feature>
<feature type="helix" evidence="8">
    <location>
        <begin position="183"/>
        <end position="185"/>
    </location>
</feature>
<feature type="strand" evidence="8">
    <location>
        <begin position="186"/>
        <end position="188"/>
    </location>
</feature>
<feature type="helix" evidence="8">
    <location>
        <begin position="191"/>
        <end position="193"/>
    </location>
</feature>
<feature type="helix" evidence="8">
    <location>
        <begin position="202"/>
        <end position="217"/>
    </location>
</feature>
<feature type="helix" evidence="8">
    <location>
        <begin position="222"/>
        <end position="224"/>
    </location>
</feature>
<feature type="strand" evidence="8">
    <location>
        <begin position="226"/>
        <end position="230"/>
    </location>
</feature>
<feature type="helix" evidence="8">
    <location>
        <begin position="235"/>
        <end position="245"/>
    </location>
</feature>
<feature type="strand" evidence="8">
    <location>
        <begin position="249"/>
        <end position="254"/>
    </location>
</feature>
<feature type="strand" evidence="8">
    <location>
        <begin position="259"/>
        <end position="261"/>
    </location>
</feature>
<feature type="helix" evidence="8">
    <location>
        <begin position="282"/>
        <end position="284"/>
    </location>
</feature>
<feature type="helix" evidence="8">
    <location>
        <begin position="291"/>
        <end position="296"/>
    </location>
</feature>
<feature type="strand" evidence="8">
    <location>
        <begin position="301"/>
        <end position="304"/>
    </location>
</feature>
<feature type="turn" evidence="8">
    <location>
        <begin position="313"/>
        <end position="315"/>
    </location>
</feature>
<feature type="helix" evidence="8">
    <location>
        <begin position="316"/>
        <end position="318"/>
    </location>
</feature>
<feature type="strand" evidence="8">
    <location>
        <begin position="322"/>
        <end position="325"/>
    </location>
</feature>
<feature type="strand" evidence="8">
    <location>
        <begin position="328"/>
        <end position="330"/>
    </location>
</feature>
<feature type="helix" evidence="8">
    <location>
        <begin position="334"/>
        <end position="342"/>
    </location>
</feature>
<feature type="strand" evidence="8">
    <location>
        <begin position="346"/>
        <end position="348"/>
    </location>
</feature>
<feature type="helix" evidence="8">
    <location>
        <begin position="350"/>
        <end position="353"/>
    </location>
</feature>
<feature type="helix" evidence="8">
    <location>
        <begin position="356"/>
        <end position="370"/>
    </location>
</feature>
<feature type="helix" evidence="8">
    <location>
        <begin position="376"/>
        <end position="400"/>
    </location>
</feature>
<feature type="helix" evidence="8">
    <location>
        <begin position="405"/>
        <end position="423"/>
    </location>
</feature>
<comment type="function">
    <text evidence="3 5">GudB seems to be intrinsically inactive, however spontaneous mutations removing a 9-bp direct repeat within the wild-type gudB sequence activated the GudB protein and allowed more-efficient utilization of amino acids of the glutamate family (called gutB1). This 3 amino acid insertion presumably causes severe destabilization of the fold of the protein, leading to an inactive enzyme that is very quickly degraded. The cryptic GudB serves as a buffer that may compensate for mutations in the rocG gene and that can also be decryptified for the utilization of glutamate as a single carbon source in the absence of arginine. It is unable to synthesize glutamate.</text>
</comment>
<comment type="catalytic activity">
    <reaction>
        <text>L-glutamate + NAD(+) + H2O = 2-oxoglutarate + NH4(+) + NADH + H(+)</text>
        <dbReference type="Rhea" id="RHEA:15133"/>
        <dbReference type="ChEBI" id="CHEBI:15377"/>
        <dbReference type="ChEBI" id="CHEBI:15378"/>
        <dbReference type="ChEBI" id="CHEBI:16810"/>
        <dbReference type="ChEBI" id="CHEBI:28938"/>
        <dbReference type="ChEBI" id="CHEBI:29985"/>
        <dbReference type="ChEBI" id="CHEBI:57540"/>
        <dbReference type="ChEBI" id="CHEBI:57945"/>
        <dbReference type="EC" id="1.4.1.2"/>
    </reaction>
</comment>
<comment type="subunit">
    <text evidence="4">Homohexamer.</text>
</comment>
<comment type="induction">
    <text evidence="5">Constitutively expressed.</text>
</comment>
<comment type="disruption phenotype">
    <text evidence="5">No visible phenotype. Cells lacking this gene show no growth defect; a double rocG-gudB disruption has the same phenotype as a single rocG disruption.</text>
</comment>
<comment type="similarity">
    <text evidence="7">Belongs to the Glu/Leu/Phe/Val dehydrogenases family.</text>
</comment>
<accession>P50735</accession>
<keyword id="KW-0002">3D-structure</keyword>
<keyword id="KW-0520">NAD</keyword>
<keyword id="KW-0560">Oxidoreductase</keyword>
<keyword id="KW-1185">Reference proteome</keyword>
<reference key="1">
    <citation type="journal article" date="1996" name="Microbiology">
        <title>Sequence analysis of the Bacillus subtilis chromosome region between the serA and kdg loci cloned in a yeast artificial chromosome.</title>
        <authorList>
            <person name="Sorokin A.V."/>
            <person name="Azevedo V."/>
            <person name="Zumstein E."/>
            <person name="Galleron N."/>
            <person name="Ehrlich S.D."/>
            <person name="Serror P."/>
        </authorList>
    </citation>
    <scope>NUCLEOTIDE SEQUENCE [GENOMIC DNA]</scope>
    <source>
        <strain>168 / Marburg / ATCC 6051 / DSM 10 / JCM 1465 / NBRC 13719 / NCIMB 3610 / NRRL NRS-744 / VKM B-501</strain>
    </source>
</reference>
<reference key="2">
    <citation type="journal article" date="1997" name="Nature">
        <title>The complete genome sequence of the Gram-positive bacterium Bacillus subtilis.</title>
        <authorList>
            <person name="Kunst F."/>
            <person name="Ogasawara N."/>
            <person name="Moszer I."/>
            <person name="Albertini A.M."/>
            <person name="Alloni G."/>
            <person name="Azevedo V."/>
            <person name="Bertero M.G."/>
            <person name="Bessieres P."/>
            <person name="Bolotin A."/>
            <person name="Borchert S."/>
            <person name="Borriss R."/>
            <person name="Boursier L."/>
            <person name="Brans A."/>
            <person name="Braun M."/>
            <person name="Brignell S.C."/>
            <person name="Bron S."/>
            <person name="Brouillet S."/>
            <person name="Bruschi C.V."/>
            <person name="Caldwell B."/>
            <person name="Capuano V."/>
            <person name="Carter N.M."/>
            <person name="Choi S.-K."/>
            <person name="Codani J.-J."/>
            <person name="Connerton I.F."/>
            <person name="Cummings N.J."/>
            <person name="Daniel R.A."/>
            <person name="Denizot F."/>
            <person name="Devine K.M."/>
            <person name="Duesterhoeft A."/>
            <person name="Ehrlich S.D."/>
            <person name="Emmerson P.T."/>
            <person name="Entian K.-D."/>
            <person name="Errington J."/>
            <person name="Fabret C."/>
            <person name="Ferrari E."/>
            <person name="Foulger D."/>
            <person name="Fritz C."/>
            <person name="Fujita M."/>
            <person name="Fujita Y."/>
            <person name="Fuma S."/>
            <person name="Galizzi A."/>
            <person name="Galleron N."/>
            <person name="Ghim S.-Y."/>
            <person name="Glaser P."/>
            <person name="Goffeau A."/>
            <person name="Golightly E.J."/>
            <person name="Grandi G."/>
            <person name="Guiseppi G."/>
            <person name="Guy B.J."/>
            <person name="Haga K."/>
            <person name="Haiech J."/>
            <person name="Harwood C.R."/>
            <person name="Henaut A."/>
            <person name="Hilbert H."/>
            <person name="Holsappel S."/>
            <person name="Hosono S."/>
            <person name="Hullo M.-F."/>
            <person name="Itaya M."/>
            <person name="Jones L.-M."/>
            <person name="Joris B."/>
            <person name="Karamata D."/>
            <person name="Kasahara Y."/>
            <person name="Klaerr-Blanchard M."/>
            <person name="Klein C."/>
            <person name="Kobayashi Y."/>
            <person name="Koetter P."/>
            <person name="Koningstein G."/>
            <person name="Krogh S."/>
            <person name="Kumano M."/>
            <person name="Kurita K."/>
            <person name="Lapidus A."/>
            <person name="Lardinois S."/>
            <person name="Lauber J."/>
            <person name="Lazarevic V."/>
            <person name="Lee S.-M."/>
            <person name="Levine A."/>
            <person name="Liu H."/>
            <person name="Masuda S."/>
            <person name="Mauel C."/>
            <person name="Medigue C."/>
            <person name="Medina N."/>
            <person name="Mellado R.P."/>
            <person name="Mizuno M."/>
            <person name="Moestl D."/>
            <person name="Nakai S."/>
            <person name="Noback M."/>
            <person name="Noone D."/>
            <person name="O'Reilly M."/>
            <person name="Ogawa K."/>
            <person name="Ogiwara A."/>
            <person name="Oudega B."/>
            <person name="Park S.-H."/>
            <person name="Parro V."/>
            <person name="Pohl T.M."/>
            <person name="Portetelle D."/>
            <person name="Porwollik S."/>
            <person name="Prescott A.M."/>
            <person name="Presecan E."/>
            <person name="Pujic P."/>
            <person name="Purnelle B."/>
            <person name="Rapoport G."/>
            <person name="Rey M."/>
            <person name="Reynolds S."/>
            <person name="Rieger M."/>
            <person name="Rivolta C."/>
            <person name="Rocha E."/>
            <person name="Roche B."/>
            <person name="Rose M."/>
            <person name="Sadaie Y."/>
            <person name="Sato T."/>
            <person name="Scanlan E."/>
            <person name="Schleich S."/>
            <person name="Schroeter R."/>
            <person name="Scoffone F."/>
            <person name="Sekiguchi J."/>
            <person name="Sekowska A."/>
            <person name="Seror S.J."/>
            <person name="Serror P."/>
            <person name="Shin B.-S."/>
            <person name="Soldo B."/>
            <person name="Sorokin A."/>
            <person name="Tacconi E."/>
            <person name="Takagi T."/>
            <person name="Takahashi H."/>
            <person name="Takemaru K."/>
            <person name="Takeuchi M."/>
            <person name="Tamakoshi A."/>
            <person name="Tanaka T."/>
            <person name="Terpstra P."/>
            <person name="Tognoni A."/>
            <person name="Tosato V."/>
            <person name="Uchiyama S."/>
            <person name="Vandenbol M."/>
            <person name="Vannier F."/>
            <person name="Vassarotti A."/>
            <person name="Viari A."/>
            <person name="Wambutt R."/>
            <person name="Wedler E."/>
            <person name="Wedler H."/>
            <person name="Weitzenegger T."/>
            <person name="Winters P."/>
            <person name="Wipat A."/>
            <person name="Yamamoto H."/>
            <person name="Yamane K."/>
            <person name="Yasumoto K."/>
            <person name="Yata K."/>
            <person name="Yoshida K."/>
            <person name="Yoshikawa H.-F."/>
            <person name="Zumstein E."/>
            <person name="Yoshikawa H."/>
            <person name="Danchin A."/>
        </authorList>
    </citation>
    <scope>NUCLEOTIDE SEQUENCE [LARGE SCALE GENOMIC DNA]</scope>
    <source>
        <strain>168</strain>
    </source>
</reference>
<reference key="3">
    <citation type="journal article" date="2009" name="Microbiology">
        <title>From a consortium sequence to a unified sequence: the Bacillus subtilis 168 reference genome a decade later.</title>
        <authorList>
            <person name="Barbe V."/>
            <person name="Cruveiller S."/>
            <person name="Kunst F."/>
            <person name="Lenoble P."/>
            <person name="Meurice G."/>
            <person name="Sekowska A."/>
            <person name="Vallenet D."/>
            <person name="Wang T."/>
            <person name="Moszer I."/>
            <person name="Medigue C."/>
            <person name="Danchin A."/>
        </authorList>
    </citation>
    <scope>SEQUENCE REVISION TO 71</scope>
</reference>
<reference key="4">
    <citation type="journal article" date="1998" name="J. Bacteriol.">
        <title>Role and regulation of Bacillus subtilis glutamate dehydrogenase genes.</title>
        <authorList>
            <person name="Belitsky B.R."/>
            <person name="Sonenshein A.L."/>
        </authorList>
    </citation>
    <scope>FUNCTION AS A CRYPTIC GLUTAMATE DEHYDROGENASE</scope>
    <scope>DISRUPTION PHENOTYPE</scope>
    <scope>INDUCTION</scope>
    <scope>NOMENCLATURE</scope>
    <scope>MUTAGENESIS OF 97-VAL--ALA-99</scope>
    <source>
        <strain>168 / SMY</strain>
    </source>
</reference>
<reference key="5">
    <citation type="journal article" date="2008" name="J. Bacteriol.">
        <title>Glutamate metabolism in Bacillus subtilis: gene expression and enzyme activities evolved to avoid futile cycles and to allow rapid responses to perturbations of the system.</title>
        <authorList>
            <person name="Commichau F.M."/>
            <person name="Gunka K."/>
            <person name="Landmann J.J."/>
            <person name="Stulke J."/>
        </authorList>
    </citation>
    <scope>FUNCTION OF CRYPTIC GLUTAMATE DEHYDROGENASE</scope>
</reference>
<reference key="6">
    <citation type="journal article" date="2010" name="J. Mol. Biol.">
        <title>Functional dissection of a trigger enzyme: mutations of the bacillus subtilis glutamate dehydrogenase RocG that affect differentially its catalytic activity and regulatory properties.</title>
        <authorList>
            <person name="Gunka K."/>
            <person name="Newman J.A."/>
            <person name="Commichau F.M."/>
            <person name="Herzberg C."/>
            <person name="Rodrigues C."/>
            <person name="Hewitt L."/>
            <person name="Lewis R.J."/>
            <person name="Stulke J."/>
        </authorList>
    </citation>
    <scope>X-RAY CRYSTALLOGRAPHY (2.4 ANGSTROMS)</scope>
    <scope>SUBUNIT</scope>
</reference>
<protein>
    <recommendedName>
        <fullName>Cryptic catabolic NAD-specific glutamate dehydrogenase GudB</fullName>
        <shortName>NAD-GDH</shortName>
        <ecNumber>1.4.1.2</ecNumber>
    </recommendedName>
</protein>
<proteinExistence type="evidence at protein level"/>